<reference key="1">
    <citation type="submission" date="2006-12" db="EMBL/GenBank/DDBJ databases">
        <title>Complete sequence of chromosome 1 of Acidovorax sp. JS42.</title>
        <authorList>
            <person name="Copeland A."/>
            <person name="Lucas S."/>
            <person name="Lapidus A."/>
            <person name="Barry K."/>
            <person name="Detter J.C."/>
            <person name="Glavina del Rio T."/>
            <person name="Dalin E."/>
            <person name="Tice H."/>
            <person name="Pitluck S."/>
            <person name="Chertkov O."/>
            <person name="Brettin T."/>
            <person name="Bruce D."/>
            <person name="Han C."/>
            <person name="Tapia R."/>
            <person name="Gilna P."/>
            <person name="Schmutz J."/>
            <person name="Larimer F."/>
            <person name="Land M."/>
            <person name="Hauser L."/>
            <person name="Kyrpides N."/>
            <person name="Kim E."/>
            <person name="Stahl D."/>
            <person name="Richardson P."/>
        </authorList>
    </citation>
    <scope>NUCLEOTIDE SEQUENCE [LARGE SCALE GENOMIC DNA]</scope>
    <source>
        <strain>JS42</strain>
    </source>
</reference>
<organism>
    <name type="scientific">Acidovorax sp. (strain JS42)</name>
    <dbReference type="NCBI Taxonomy" id="232721"/>
    <lineage>
        <taxon>Bacteria</taxon>
        <taxon>Pseudomonadati</taxon>
        <taxon>Pseudomonadota</taxon>
        <taxon>Betaproteobacteria</taxon>
        <taxon>Burkholderiales</taxon>
        <taxon>Comamonadaceae</taxon>
        <taxon>Acidovorax</taxon>
    </lineage>
</organism>
<proteinExistence type="inferred from homology"/>
<dbReference type="EMBL" id="CP000539">
    <property type="protein sequence ID" value="ABM40875.1"/>
    <property type="molecule type" value="Genomic_DNA"/>
</dbReference>
<dbReference type="SMR" id="A1W3Q0"/>
<dbReference type="STRING" id="232721.Ajs_0629"/>
<dbReference type="KEGG" id="ajs:Ajs_0629"/>
<dbReference type="eggNOG" id="COG0316">
    <property type="taxonomic scope" value="Bacteria"/>
</dbReference>
<dbReference type="HOGENOM" id="CLU_069054_5_3_4"/>
<dbReference type="Proteomes" id="UP000000645">
    <property type="component" value="Chromosome"/>
</dbReference>
<dbReference type="GO" id="GO:0051537">
    <property type="term" value="F:2 iron, 2 sulfur cluster binding"/>
    <property type="evidence" value="ECO:0007669"/>
    <property type="project" value="TreeGrafter"/>
</dbReference>
<dbReference type="GO" id="GO:0051539">
    <property type="term" value="F:4 iron, 4 sulfur cluster binding"/>
    <property type="evidence" value="ECO:0007669"/>
    <property type="project" value="TreeGrafter"/>
</dbReference>
<dbReference type="GO" id="GO:0005506">
    <property type="term" value="F:iron ion binding"/>
    <property type="evidence" value="ECO:0007669"/>
    <property type="project" value="UniProtKB-UniRule"/>
</dbReference>
<dbReference type="GO" id="GO:0016226">
    <property type="term" value="P:iron-sulfur cluster assembly"/>
    <property type="evidence" value="ECO:0007669"/>
    <property type="project" value="UniProtKB-UniRule"/>
</dbReference>
<dbReference type="FunFam" id="2.60.300.12:FF:000002">
    <property type="entry name" value="Iron-sulfur cluster insertion protein ErpA"/>
    <property type="match status" value="1"/>
</dbReference>
<dbReference type="Gene3D" id="2.60.300.12">
    <property type="entry name" value="HesB-like domain"/>
    <property type="match status" value="1"/>
</dbReference>
<dbReference type="HAMAP" id="MF_01380">
    <property type="entry name" value="Fe_S_insert_ErpA"/>
    <property type="match status" value="1"/>
</dbReference>
<dbReference type="InterPro" id="IPR000361">
    <property type="entry name" value="FeS_biogenesis"/>
</dbReference>
<dbReference type="InterPro" id="IPR016092">
    <property type="entry name" value="FeS_cluster_insertion"/>
</dbReference>
<dbReference type="InterPro" id="IPR017870">
    <property type="entry name" value="FeS_cluster_insertion_CS"/>
</dbReference>
<dbReference type="InterPro" id="IPR023063">
    <property type="entry name" value="FeS_cluster_insertion_RrpA"/>
</dbReference>
<dbReference type="InterPro" id="IPR035903">
    <property type="entry name" value="HesB-like_dom_sf"/>
</dbReference>
<dbReference type="NCBIfam" id="TIGR00049">
    <property type="entry name" value="iron-sulfur cluster assembly accessory protein"/>
    <property type="match status" value="1"/>
</dbReference>
<dbReference type="NCBIfam" id="NF010147">
    <property type="entry name" value="PRK13623.1"/>
    <property type="match status" value="1"/>
</dbReference>
<dbReference type="PANTHER" id="PTHR43011">
    <property type="entry name" value="IRON-SULFUR CLUSTER ASSEMBLY 2 HOMOLOG, MITOCHONDRIAL"/>
    <property type="match status" value="1"/>
</dbReference>
<dbReference type="PANTHER" id="PTHR43011:SF1">
    <property type="entry name" value="IRON-SULFUR CLUSTER ASSEMBLY 2 HOMOLOG, MITOCHONDRIAL"/>
    <property type="match status" value="1"/>
</dbReference>
<dbReference type="Pfam" id="PF01521">
    <property type="entry name" value="Fe-S_biosyn"/>
    <property type="match status" value="1"/>
</dbReference>
<dbReference type="SUPFAM" id="SSF89360">
    <property type="entry name" value="HesB-like domain"/>
    <property type="match status" value="1"/>
</dbReference>
<dbReference type="PROSITE" id="PS01152">
    <property type="entry name" value="HESB"/>
    <property type="match status" value="1"/>
</dbReference>
<name>ERPA_ACISJ</name>
<evidence type="ECO:0000255" key="1">
    <source>
        <dbReference type="HAMAP-Rule" id="MF_01380"/>
    </source>
</evidence>
<protein>
    <recommendedName>
        <fullName evidence="1">Putative iron-sulfur cluster insertion protein ErpA</fullName>
    </recommendedName>
</protein>
<sequence length="124" mass="13234">MSAVAENTTTEMPAPILFTDSAAAKVAELIAEEGNPDLKLRVFVQGGGCSGFQYGFTFDEITNEDDTTMTKNGVSLLIDAMSYQYLVGAEIDYKEDLQGAQFVIKNPNAASTCGCGSSFSVEDH</sequence>
<accession>A1W3Q0</accession>
<keyword id="KW-0408">Iron</keyword>
<keyword id="KW-0411">Iron-sulfur</keyword>
<keyword id="KW-0479">Metal-binding</keyword>
<gene>
    <name evidence="1" type="primary">erpA</name>
    <name type="ordered locus">Ajs_0629</name>
</gene>
<comment type="function">
    <text evidence="1">Required for insertion of 4Fe-4S clusters.</text>
</comment>
<comment type="cofactor">
    <cofactor evidence="1">
        <name>iron-sulfur cluster</name>
        <dbReference type="ChEBI" id="CHEBI:30408"/>
    </cofactor>
    <text evidence="1">Binds 1 iron-sulfur cluster per subunit.</text>
</comment>
<comment type="subunit">
    <text evidence="1">Homodimer.</text>
</comment>
<comment type="similarity">
    <text evidence="1">Belongs to the HesB/IscA family.</text>
</comment>
<feature type="chain" id="PRO_0000311436" description="Putative iron-sulfur cluster insertion protein ErpA">
    <location>
        <begin position="1"/>
        <end position="124"/>
    </location>
</feature>
<feature type="binding site" evidence="1">
    <location>
        <position position="49"/>
    </location>
    <ligand>
        <name>iron-sulfur cluster</name>
        <dbReference type="ChEBI" id="CHEBI:30408"/>
    </ligand>
</feature>
<feature type="binding site" evidence="1">
    <location>
        <position position="113"/>
    </location>
    <ligand>
        <name>iron-sulfur cluster</name>
        <dbReference type="ChEBI" id="CHEBI:30408"/>
    </ligand>
</feature>
<feature type="binding site" evidence="1">
    <location>
        <position position="115"/>
    </location>
    <ligand>
        <name>iron-sulfur cluster</name>
        <dbReference type="ChEBI" id="CHEBI:30408"/>
    </ligand>
</feature>